<name>COAA_STRA3</name>
<keyword id="KW-0067">ATP-binding</keyword>
<keyword id="KW-0173">Coenzyme A biosynthesis</keyword>
<keyword id="KW-0963">Cytoplasm</keyword>
<keyword id="KW-0418">Kinase</keyword>
<keyword id="KW-0547">Nucleotide-binding</keyword>
<keyword id="KW-0808">Transferase</keyword>
<evidence type="ECO:0000255" key="1">
    <source>
        <dbReference type="HAMAP-Rule" id="MF_00215"/>
    </source>
</evidence>
<protein>
    <recommendedName>
        <fullName evidence="1">Pantothenate kinase</fullName>
        <ecNumber evidence="1">2.7.1.33</ecNumber>
    </recommendedName>
    <alternativeName>
        <fullName evidence="1">Pantothenic acid kinase</fullName>
    </alternativeName>
</protein>
<gene>
    <name evidence="1" type="primary">coaA</name>
    <name type="ordered locus">gbs0939</name>
</gene>
<dbReference type="EC" id="2.7.1.33" evidence="1"/>
<dbReference type="EMBL" id="AL766848">
    <property type="protein sequence ID" value="CAD46598.1"/>
    <property type="molecule type" value="Genomic_DNA"/>
</dbReference>
<dbReference type="RefSeq" id="WP_001058331.1">
    <property type="nucleotide sequence ID" value="NC_004368.1"/>
</dbReference>
<dbReference type="SMR" id="P63812"/>
<dbReference type="GeneID" id="66885873"/>
<dbReference type="KEGG" id="san:gbs0939"/>
<dbReference type="eggNOG" id="COG1072">
    <property type="taxonomic scope" value="Bacteria"/>
</dbReference>
<dbReference type="HOGENOM" id="CLU_053818_1_1_9"/>
<dbReference type="UniPathway" id="UPA00241">
    <property type="reaction ID" value="UER00352"/>
</dbReference>
<dbReference type="Proteomes" id="UP000000823">
    <property type="component" value="Chromosome"/>
</dbReference>
<dbReference type="GO" id="GO:0005737">
    <property type="term" value="C:cytoplasm"/>
    <property type="evidence" value="ECO:0007669"/>
    <property type="project" value="UniProtKB-SubCell"/>
</dbReference>
<dbReference type="GO" id="GO:0005524">
    <property type="term" value="F:ATP binding"/>
    <property type="evidence" value="ECO:0007669"/>
    <property type="project" value="UniProtKB-UniRule"/>
</dbReference>
<dbReference type="GO" id="GO:0004594">
    <property type="term" value="F:pantothenate kinase activity"/>
    <property type="evidence" value="ECO:0007669"/>
    <property type="project" value="UniProtKB-UniRule"/>
</dbReference>
<dbReference type="GO" id="GO:0015937">
    <property type="term" value="P:coenzyme A biosynthetic process"/>
    <property type="evidence" value="ECO:0007669"/>
    <property type="project" value="UniProtKB-UniRule"/>
</dbReference>
<dbReference type="CDD" id="cd02025">
    <property type="entry name" value="PanK"/>
    <property type="match status" value="1"/>
</dbReference>
<dbReference type="Gene3D" id="3.40.50.300">
    <property type="entry name" value="P-loop containing nucleotide triphosphate hydrolases"/>
    <property type="match status" value="1"/>
</dbReference>
<dbReference type="HAMAP" id="MF_00215">
    <property type="entry name" value="Pantothen_kinase_1"/>
    <property type="match status" value="1"/>
</dbReference>
<dbReference type="InterPro" id="IPR027417">
    <property type="entry name" value="P-loop_NTPase"/>
</dbReference>
<dbReference type="InterPro" id="IPR004566">
    <property type="entry name" value="PanK"/>
</dbReference>
<dbReference type="InterPro" id="IPR006083">
    <property type="entry name" value="PRK/URK"/>
</dbReference>
<dbReference type="NCBIfam" id="TIGR00554">
    <property type="entry name" value="panK_bact"/>
    <property type="match status" value="1"/>
</dbReference>
<dbReference type="PANTHER" id="PTHR10285">
    <property type="entry name" value="URIDINE KINASE"/>
    <property type="match status" value="1"/>
</dbReference>
<dbReference type="Pfam" id="PF00485">
    <property type="entry name" value="PRK"/>
    <property type="match status" value="1"/>
</dbReference>
<dbReference type="PIRSF" id="PIRSF000545">
    <property type="entry name" value="Pantothenate_kin"/>
    <property type="match status" value="1"/>
</dbReference>
<dbReference type="SUPFAM" id="SSF52540">
    <property type="entry name" value="P-loop containing nucleoside triphosphate hydrolases"/>
    <property type="match status" value="1"/>
</dbReference>
<accession>P63812</accession>
<accession>Q8DZZ1</accession>
<accession>Q8E5P2</accession>
<comment type="catalytic activity">
    <reaction evidence="1">
        <text>(R)-pantothenate + ATP = (R)-4'-phosphopantothenate + ADP + H(+)</text>
        <dbReference type="Rhea" id="RHEA:16373"/>
        <dbReference type="ChEBI" id="CHEBI:10986"/>
        <dbReference type="ChEBI" id="CHEBI:15378"/>
        <dbReference type="ChEBI" id="CHEBI:29032"/>
        <dbReference type="ChEBI" id="CHEBI:30616"/>
        <dbReference type="ChEBI" id="CHEBI:456216"/>
        <dbReference type="EC" id="2.7.1.33"/>
    </reaction>
</comment>
<comment type="pathway">
    <text evidence="1">Cofactor biosynthesis; coenzyme A biosynthesis; CoA from (R)-pantothenate: step 1/5.</text>
</comment>
<comment type="subcellular location">
    <subcellularLocation>
        <location evidence="1">Cytoplasm</location>
    </subcellularLocation>
</comment>
<comment type="similarity">
    <text evidence="1">Belongs to the prokaryotic pantothenate kinase family.</text>
</comment>
<feature type="chain" id="PRO_0000194449" description="Pantothenate kinase">
    <location>
        <begin position="1"/>
        <end position="306"/>
    </location>
</feature>
<feature type="binding site" evidence="1">
    <location>
        <begin position="91"/>
        <end position="98"/>
    </location>
    <ligand>
        <name>ATP</name>
        <dbReference type="ChEBI" id="CHEBI:30616"/>
    </ligand>
</feature>
<organism>
    <name type="scientific">Streptococcus agalactiae serotype III (strain NEM316)</name>
    <dbReference type="NCBI Taxonomy" id="211110"/>
    <lineage>
        <taxon>Bacteria</taxon>
        <taxon>Bacillati</taxon>
        <taxon>Bacillota</taxon>
        <taxon>Bacilli</taxon>
        <taxon>Lactobacillales</taxon>
        <taxon>Streptococcaceae</taxon>
        <taxon>Streptococcus</taxon>
    </lineage>
</organism>
<proteinExistence type="inferred from homology"/>
<reference key="1">
    <citation type="journal article" date="2002" name="Mol. Microbiol.">
        <title>Genome sequence of Streptococcus agalactiae, a pathogen causing invasive neonatal disease.</title>
        <authorList>
            <person name="Glaser P."/>
            <person name="Rusniok C."/>
            <person name="Buchrieser C."/>
            <person name="Chevalier F."/>
            <person name="Frangeul L."/>
            <person name="Msadek T."/>
            <person name="Zouine M."/>
            <person name="Couve E."/>
            <person name="Lalioui L."/>
            <person name="Poyart C."/>
            <person name="Trieu-Cuot P."/>
            <person name="Kunst F."/>
        </authorList>
    </citation>
    <scope>NUCLEOTIDE SEQUENCE [LARGE SCALE GENOMIC DNA]</scope>
    <source>
        <strain>NEM316</strain>
    </source>
</reference>
<sequence length="306" mass="36093">MNNEFINFDRISRENWKDLHQQSQALLTEKELESIKSLNDNINIQDVIDIYLPLINLIQIYKRSQENLSFSKAIFLKKENYQRPFIIGISGSVAVGKSTTSRLLQLLISRTFKDSHVELVTTDGFLYPNEKLIQNGILNRKGFPESYDMESLLNFLDTIKNGITAKIPIYSHEIYDIVPNQLQTIETPDFLILEGINVFQNQQNHRLYMNDYFDFSIYIDAENKQIEEWYLQRFNSLLQLAEADPSNYYHKFTQIPPHKAMELAKDIWKTINLVNLEKYIEPTRNRADFIIHKGKHHKIDEIYLKK</sequence>